<evidence type="ECO:0000255" key="1"/>
<evidence type="ECO:0000269" key="2">
    <source>
    </source>
</evidence>
<evidence type="ECO:0000305" key="3"/>
<sequence length="49" mass="5497">MVIGLVIFVSVAAAIVGVLSNVLDMLMYVEENNEEDARIKEEQELLLLY</sequence>
<keyword id="KW-1043">Host membrane</keyword>
<keyword id="KW-0426">Late protein</keyword>
<keyword id="KW-0472">Membrane</keyword>
<keyword id="KW-1185">Reference proteome</keyword>
<keyword id="KW-0735">Signal-anchor</keyword>
<keyword id="KW-0812">Transmembrane</keyword>
<keyword id="KW-1133">Transmembrane helix</keyword>
<keyword id="KW-0946">Virion</keyword>
<proteinExistence type="evidence at transcript level"/>
<reference key="1">
    <citation type="submission" date="2003-02" db="EMBL/GenBank/DDBJ databases">
        <title>Sequencing of the coding region of Vaccinia-WR to an average 9-fold redundancy and an error rate of 0.16/10kb.</title>
        <authorList>
            <person name="Esposito J.J."/>
            <person name="Frace A.M."/>
            <person name="Sammons S.A."/>
            <person name="Olsen-Rasmussen M."/>
            <person name="Osborne J."/>
            <person name="Wohlhueter R."/>
        </authorList>
    </citation>
    <scope>NUCLEOTIDE SEQUENCE [LARGE SCALE GENOMIC DNA]</scope>
</reference>
<reference key="2">
    <citation type="journal article" date="2008" name="J. Virol.">
        <title>Vaccinia virus WR53.5/F14.5 protein is a new component of intracellular mature virus and is important for calcium-independent cell adhesion and vaccinia virus virulence in mice.</title>
        <authorList>
            <person name="Izmailyan R."/>
            <person name="Chang W."/>
        </authorList>
    </citation>
    <scope>FUNCTION</scope>
    <scope>SUBCELLULAR LOCATION</scope>
    <scope>INDUCTION</scope>
</reference>
<gene>
    <name type="primary">OPG059</name>
    <name type="synonym">F14.5L</name>
    <name type="synonym">WR53.5L</name>
</gene>
<comment type="function">
    <text evidence="2">May play a role in cell adhesion and is important for virus virulence in vivo, although it is not required for the virus life cycle in cell cultures.</text>
</comment>
<comment type="subcellular location">
    <subcellularLocation>
        <location evidence="2">Virion membrane</location>
        <topology evidence="1">Single-pass type II membrane protein</topology>
    </subcellularLocation>
    <subcellularLocation>
        <location evidence="2">Host membrane</location>
    </subcellularLocation>
    <text evidence="2">Present at the surface of intracellular mature virus (IMV). At host cell membrane is present in patches consistant with cell adhesion locations.</text>
</comment>
<comment type="induction">
    <text evidence="2">Expressed in the late phase of the viral replicative cycle.</text>
</comment>
<comment type="similarity">
    <text evidence="3">Belongs to the orthopoxvirus OPG058 family.</text>
</comment>
<feature type="chain" id="PRO_0000457653" description="Protein OPG059">
    <location>
        <begin position="1"/>
        <end position="49"/>
    </location>
</feature>
<feature type="topological domain" description="Virion surface" evidence="1">
    <location>
        <position position="1"/>
    </location>
</feature>
<feature type="transmembrane region" description="Helical" evidence="1">
    <location>
        <begin position="2"/>
        <end position="22"/>
    </location>
</feature>
<feature type="topological domain" description="Intravirion" evidence="1">
    <location>
        <begin position="23"/>
        <end position="49"/>
    </location>
</feature>
<organism>
    <name type="scientific">Vaccinia virus (strain Western Reserve)</name>
    <name type="common">VACV</name>
    <name type="synonym">Vaccinia virus (strain WR)</name>
    <dbReference type="NCBI Taxonomy" id="10254"/>
    <lineage>
        <taxon>Viruses</taxon>
        <taxon>Varidnaviria</taxon>
        <taxon>Bamfordvirae</taxon>
        <taxon>Nucleocytoviricota</taxon>
        <taxon>Pokkesviricetes</taxon>
        <taxon>Chitovirales</taxon>
        <taxon>Poxviridae</taxon>
        <taxon>Chordopoxvirinae</taxon>
        <taxon>Orthopoxvirus</taxon>
        <taxon>Vaccinia virus</taxon>
    </lineage>
</organism>
<protein>
    <recommendedName>
        <fullName>Protein OPG059</fullName>
    </recommendedName>
</protein>
<name>PG059_VACCW</name>
<accession>P0DTM8</accession>
<dbReference type="EMBL" id="AY243312">
    <property type="status" value="NOT_ANNOTATED_CDS"/>
    <property type="molecule type" value="Genomic_DNA"/>
</dbReference>
<dbReference type="SMR" id="P0DTM8"/>
<dbReference type="Proteomes" id="UP000000344">
    <property type="component" value="Genome"/>
</dbReference>
<dbReference type="GO" id="GO:0033644">
    <property type="term" value="C:host cell membrane"/>
    <property type="evidence" value="ECO:0007669"/>
    <property type="project" value="UniProtKB-SubCell"/>
</dbReference>
<dbReference type="GO" id="GO:0016020">
    <property type="term" value="C:membrane"/>
    <property type="evidence" value="ECO:0007669"/>
    <property type="project" value="UniProtKB-KW"/>
</dbReference>
<dbReference type="GO" id="GO:0055036">
    <property type="term" value="C:virion membrane"/>
    <property type="evidence" value="ECO:0007669"/>
    <property type="project" value="UniProtKB-SubCell"/>
</dbReference>
<organismHost>
    <name type="scientific">Bos taurus</name>
    <name type="common">Bovine</name>
    <dbReference type="NCBI Taxonomy" id="9913"/>
</organismHost>